<organism>
    <name type="scientific">Escherichia coli O81 (strain ED1a)</name>
    <dbReference type="NCBI Taxonomy" id="585397"/>
    <lineage>
        <taxon>Bacteria</taxon>
        <taxon>Pseudomonadati</taxon>
        <taxon>Pseudomonadota</taxon>
        <taxon>Gammaproteobacteria</taxon>
        <taxon>Enterobacterales</taxon>
        <taxon>Enterobacteriaceae</taxon>
        <taxon>Escherichia</taxon>
    </lineage>
</organism>
<comment type="function">
    <text evidence="1">Conversion of NADPH, generated by peripheral catabolic pathways, to NADH, which can enter the respiratory chain for energy generation.</text>
</comment>
<comment type="catalytic activity">
    <reaction evidence="1">
        <text>NAD(+) + NADPH = NADH + NADP(+)</text>
        <dbReference type="Rhea" id="RHEA:11692"/>
        <dbReference type="ChEBI" id="CHEBI:57540"/>
        <dbReference type="ChEBI" id="CHEBI:57783"/>
        <dbReference type="ChEBI" id="CHEBI:57945"/>
        <dbReference type="ChEBI" id="CHEBI:58349"/>
        <dbReference type="EC" id="1.6.1.1"/>
    </reaction>
</comment>
<comment type="cofactor">
    <cofactor evidence="1">
        <name>FAD</name>
        <dbReference type="ChEBI" id="CHEBI:57692"/>
    </cofactor>
    <text evidence="1">Binds 1 FAD per subunit.</text>
</comment>
<comment type="subcellular location">
    <subcellularLocation>
        <location evidence="1">Cytoplasm</location>
    </subcellularLocation>
</comment>
<comment type="similarity">
    <text evidence="1">Belongs to the class-I pyridine nucleotide-disulfide oxidoreductase family.</text>
</comment>
<accession>B7MR55</accession>
<name>STHA_ECO81</name>
<gene>
    <name evidence="1" type="primary">sthA</name>
    <name evidence="1" type="synonym">udhA</name>
    <name type="ordered locus">ECED1_4669</name>
</gene>
<protein>
    <recommendedName>
        <fullName evidence="1">Soluble pyridine nucleotide transhydrogenase</fullName>
        <shortName evidence="1">STH</shortName>
        <ecNumber evidence="1">1.6.1.1</ecNumber>
    </recommendedName>
    <alternativeName>
        <fullName evidence="1">NAD(P)(+) transhydrogenase [B-specific]</fullName>
    </alternativeName>
</protein>
<keyword id="KW-0963">Cytoplasm</keyword>
<keyword id="KW-0274">FAD</keyword>
<keyword id="KW-0285">Flavoprotein</keyword>
<keyword id="KW-0520">NAD</keyword>
<keyword id="KW-0521">NADP</keyword>
<keyword id="KW-0560">Oxidoreductase</keyword>
<reference key="1">
    <citation type="journal article" date="2009" name="PLoS Genet.">
        <title>Organised genome dynamics in the Escherichia coli species results in highly diverse adaptive paths.</title>
        <authorList>
            <person name="Touchon M."/>
            <person name="Hoede C."/>
            <person name="Tenaillon O."/>
            <person name="Barbe V."/>
            <person name="Baeriswyl S."/>
            <person name="Bidet P."/>
            <person name="Bingen E."/>
            <person name="Bonacorsi S."/>
            <person name="Bouchier C."/>
            <person name="Bouvet O."/>
            <person name="Calteau A."/>
            <person name="Chiapello H."/>
            <person name="Clermont O."/>
            <person name="Cruveiller S."/>
            <person name="Danchin A."/>
            <person name="Diard M."/>
            <person name="Dossat C."/>
            <person name="Karoui M.E."/>
            <person name="Frapy E."/>
            <person name="Garry L."/>
            <person name="Ghigo J.M."/>
            <person name="Gilles A.M."/>
            <person name="Johnson J."/>
            <person name="Le Bouguenec C."/>
            <person name="Lescat M."/>
            <person name="Mangenot S."/>
            <person name="Martinez-Jehanne V."/>
            <person name="Matic I."/>
            <person name="Nassif X."/>
            <person name="Oztas S."/>
            <person name="Petit M.A."/>
            <person name="Pichon C."/>
            <person name="Rouy Z."/>
            <person name="Ruf C.S."/>
            <person name="Schneider D."/>
            <person name="Tourret J."/>
            <person name="Vacherie B."/>
            <person name="Vallenet D."/>
            <person name="Medigue C."/>
            <person name="Rocha E.P.C."/>
            <person name="Denamur E."/>
        </authorList>
    </citation>
    <scope>NUCLEOTIDE SEQUENCE [LARGE SCALE GENOMIC DNA]</scope>
    <source>
        <strain>ED1a</strain>
    </source>
</reference>
<feature type="chain" id="PRO_1000193455" description="Soluble pyridine nucleotide transhydrogenase">
    <location>
        <begin position="1"/>
        <end position="466"/>
    </location>
</feature>
<feature type="binding site" evidence="1">
    <location>
        <begin position="36"/>
        <end position="45"/>
    </location>
    <ligand>
        <name>FAD</name>
        <dbReference type="ChEBI" id="CHEBI:57692"/>
    </ligand>
</feature>
<proteinExistence type="inferred from homology"/>
<dbReference type="EC" id="1.6.1.1" evidence="1"/>
<dbReference type="EMBL" id="CU928162">
    <property type="protein sequence ID" value="CAR10639.1"/>
    <property type="molecule type" value="Genomic_DNA"/>
</dbReference>
<dbReference type="RefSeq" id="WP_001120819.1">
    <property type="nucleotide sequence ID" value="NC_011745.1"/>
</dbReference>
<dbReference type="SMR" id="B7MR55"/>
<dbReference type="KEGG" id="ecq:ECED1_4669"/>
<dbReference type="HOGENOM" id="CLU_016755_0_0_6"/>
<dbReference type="Proteomes" id="UP000000748">
    <property type="component" value="Chromosome"/>
</dbReference>
<dbReference type="GO" id="GO:0005829">
    <property type="term" value="C:cytosol"/>
    <property type="evidence" value="ECO:0007669"/>
    <property type="project" value="TreeGrafter"/>
</dbReference>
<dbReference type="GO" id="GO:0004148">
    <property type="term" value="F:dihydrolipoyl dehydrogenase (NADH) activity"/>
    <property type="evidence" value="ECO:0007669"/>
    <property type="project" value="TreeGrafter"/>
</dbReference>
<dbReference type="GO" id="GO:0050660">
    <property type="term" value="F:flavin adenine dinucleotide binding"/>
    <property type="evidence" value="ECO:0007669"/>
    <property type="project" value="TreeGrafter"/>
</dbReference>
<dbReference type="GO" id="GO:0003957">
    <property type="term" value="F:NAD(P)+ transhydrogenase (Si-specific) activity"/>
    <property type="evidence" value="ECO:0007669"/>
    <property type="project" value="UniProtKB-UniRule"/>
</dbReference>
<dbReference type="GO" id="GO:0006103">
    <property type="term" value="P:2-oxoglutarate metabolic process"/>
    <property type="evidence" value="ECO:0007669"/>
    <property type="project" value="TreeGrafter"/>
</dbReference>
<dbReference type="GO" id="GO:0006739">
    <property type="term" value="P:NADP metabolic process"/>
    <property type="evidence" value="ECO:0007669"/>
    <property type="project" value="UniProtKB-UniRule"/>
</dbReference>
<dbReference type="FunFam" id="3.30.390.30:FF:000002">
    <property type="entry name" value="Soluble pyridine nucleotide transhydrogenase"/>
    <property type="match status" value="1"/>
</dbReference>
<dbReference type="FunFam" id="3.50.50.60:FF:000008">
    <property type="entry name" value="Soluble pyridine nucleotide transhydrogenase"/>
    <property type="match status" value="1"/>
</dbReference>
<dbReference type="Gene3D" id="3.30.390.30">
    <property type="match status" value="1"/>
</dbReference>
<dbReference type="Gene3D" id="3.50.50.60">
    <property type="entry name" value="FAD/NAD(P)-binding domain"/>
    <property type="match status" value="2"/>
</dbReference>
<dbReference type="HAMAP" id="MF_00247">
    <property type="entry name" value="SthA"/>
    <property type="match status" value="1"/>
</dbReference>
<dbReference type="InterPro" id="IPR050151">
    <property type="entry name" value="Class-I_Pyr_Nuc-Dis_Oxidored"/>
</dbReference>
<dbReference type="InterPro" id="IPR036188">
    <property type="entry name" value="FAD/NAD-bd_sf"/>
</dbReference>
<dbReference type="InterPro" id="IPR023753">
    <property type="entry name" value="FAD/NAD-binding_dom"/>
</dbReference>
<dbReference type="InterPro" id="IPR016156">
    <property type="entry name" value="FAD/NAD-linked_Rdtase_dimer_sf"/>
</dbReference>
<dbReference type="InterPro" id="IPR001100">
    <property type="entry name" value="Pyr_nuc-diS_OxRdtase"/>
</dbReference>
<dbReference type="InterPro" id="IPR004099">
    <property type="entry name" value="Pyr_nucl-diS_OxRdtase_dimer"/>
</dbReference>
<dbReference type="InterPro" id="IPR022962">
    <property type="entry name" value="STH_gammaproteobact"/>
</dbReference>
<dbReference type="NCBIfam" id="NF003585">
    <property type="entry name" value="PRK05249.1"/>
    <property type="match status" value="1"/>
</dbReference>
<dbReference type="PANTHER" id="PTHR22912">
    <property type="entry name" value="DISULFIDE OXIDOREDUCTASE"/>
    <property type="match status" value="1"/>
</dbReference>
<dbReference type="PANTHER" id="PTHR22912:SF93">
    <property type="entry name" value="SOLUBLE PYRIDINE NUCLEOTIDE TRANSHYDROGENASE"/>
    <property type="match status" value="1"/>
</dbReference>
<dbReference type="Pfam" id="PF07992">
    <property type="entry name" value="Pyr_redox_2"/>
    <property type="match status" value="1"/>
</dbReference>
<dbReference type="Pfam" id="PF02852">
    <property type="entry name" value="Pyr_redox_dim"/>
    <property type="match status" value="1"/>
</dbReference>
<dbReference type="PIRSF" id="PIRSF000350">
    <property type="entry name" value="Mercury_reductase_MerA"/>
    <property type="match status" value="1"/>
</dbReference>
<dbReference type="PRINTS" id="PR00368">
    <property type="entry name" value="FADPNR"/>
</dbReference>
<dbReference type="PRINTS" id="PR00411">
    <property type="entry name" value="PNDRDTASEI"/>
</dbReference>
<dbReference type="SUPFAM" id="SSF51905">
    <property type="entry name" value="FAD/NAD(P)-binding domain"/>
    <property type="match status" value="1"/>
</dbReference>
<dbReference type="SUPFAM" id="SSF55424">
    <property type="entry name" value="FAD/NAD-linked reductases, dimerisation (C-terminal) domain"/>
    <property type="match status" value="1"/>
</dbReference>
<evidence type="ECO:0000255" key="1">
    <source>
        <dbReference type="HAMAP-Rule" id="MF_00247"/>
    </source>
</evidence>
<sequence>MPHSYDYDAIVIGSGPGGEGAAMGLVKQGARVAVIERYQNVGGGCTHWGTIPSKALRHAVSRIIEFNQNPLYSDHSRLLRSSFADILNHADNVINQQTRMRQGFYERNHCEILQGNARFVDEHTLALDCPDGSVETLTAEKFVIACGSRPYHPTDVDFTHPRIYDSNSILSMHHEPRHVLIYGAGVIGCEYASIFRGMDVKVDLINTRDRLLAFLDQEMSDSLSYHFWNSGVVIRHNEEYEKIEGCDDGVIMHLKSGKKLKADCLLYANGRTGNTDSLALQNIGLETDSRGQLKVNSMYQTAQPHVYAVGDVIGYPSLASAAYDQGRIAAQALVKGEANAHLIEDIPTGIYTIPEISSVGKTEQQLTAMKVPYEVGRAQFKHLARAQIVGMNVGTLKILFHRETKEILGIHCFGERAAEIIHIGQAIMEQKGGGNTIEYFVNTTFNYPTMAEAYRVAALNGLNRLF</sequence>